<organism>
    <name type="scientific">Mus musculus</name>
    <name type="common">Mouse</name>
    <dbReference type="NCBI Taxonomy" id="10090"/>
    <lineage>
        <taxon>Eukaryota</taxon>
        <taxon>Metazoa</taxon>
        <taxon>Chordata</taxon>
        <taxon>Craniata</taxon>
        <taxon>Vertebrata</taxon>
        <taxon>Euteleostomi</taxon>
        <taxon>Mammalia</taxon>
        <taxon>Eutheria</taxon>
        <taxon>Euarchontoglires</taxon>
        <taxon>Glires</taxon>
        <taxon>Rodentia</taxon>
        <taxon>Myomorpha</taxon>
        <taxon>Muroidea</taxon>
        <taxon>Muridae</taxon>
        <taxon>Murinae</taxon>
        <taxon>Mus</taxon>
        <taxon>Mus</taxon>
    </lineage>
</organism>
<sequence>MLIQKNQCHITRTRENCDCTMNTVNEDLCLSASTLGSSSVTTQLVDPLDRKICLIRRQNDVKKRVIWGIEVAEKLHWKGWELGKETTRTLVLKNLSLKTQKMKYRPPKTKFFFTIIPQPIFLSPGITLTLPIVFRPLEAKEYTDQLWFEKEEGVFCVTLKATLPCYKLDCPSSLQLPMCALGDTVETWFCLNNVGDLPTFFTWEVPAPFQILPTTGLLEPGLGCKIKVTFEPLIAVIHEVEALCWYGKGNKQKNSINIQAAAKCAQLLVSIKHKGLEDQDQEGFQKVVHFGYVSVGSVAERQIRLYNPSAVNAPFKIEMAEHVLTKDPSFSCSTSQGIVPPGEKKCLSLFFHPKTLDSRAIDYFSIIPSGCATKTLLQVVGFCRGPDAVLQHSCVNFHWVKLGERREQTLWIENQSDCQAHFQFDIDCQESVFSIRPAFGTLAGKTRMTLHCAYQPTHPIISFRRVACLIHHQDPLFLDLIGTCHSDSIKPAILTPQHLTWYRTHLARGLTLYPPDILAAMLKEKKLERDEDGALILPIESLPMQELEDLPDQKYPNIPPMTEYFFDGTRDLAIFPPAVCLEPIDVDFGACPGPEAPNPVPLCLRNYTKGKITVVWTGRSDCPFWVTPVTSDVPPLKSIALRLYFQPSSPNCLYAVELEAFAVYKVLQCYSNIEEDCTVVPSWCLKVRARGHSYSPALEHHIPHYSLDSPQTFPAVSPGKPSYRSLFLVNKGSMLMTFSLAPNSSSDITLRPSSGLIGPGAHQVFLISTYPKGTSWRQHIFYLNFNFYPQYLKEVSMQSREEPLDLKLDTHKSIYFKPTWVGCSSTSNFTFHNPSRLPLQFEWRVSQEHQKVLAVQPSKGTIHPNENLTLTWIFSPLEEIKYLFRVGIWVWEARQSQKTKPQATVHYRIRLVGMGVTGCLSAKPVELDFGNVLVNSQEVKPLVLLNDGNCTLYYRLVLEQHRPKGLHSDPCALEFDHSEGTMPPHSQDTIYLTARPKVRSQYSWTISYCLLSQRAPPTNSMDGKKKALCHVSLAAAYPLLSVLDICSMGSTEGITRKHLWHLFSLDTLNSYLARDPTAKELTYKVPTRHSMSRTPPIFTPLKLDFNFGAAPHNALPSVVLLVLKNCGLVPLDWAFLFPSDQQLDLDLWVEQEDLNSNELHQMRAEDNSLFSINPKTGSLNPGQEQMVEFTYRHLFVGTDRLSVLFKVSHGREILLQFIGVTVKLEQKYVHFTSTIHQFIPVPIGDTLPPRQIYELYNGGSVPVTYEVQVSVLSKVQEKNFDHPIFCCLNPKGDIQPGTTARILWIFSPIEAKTYTVEVPIHIIGWNSAVVCFQGVGYDPCVMGDTAPFHSISSWDSSSISSRLMVPGQNVFLSQSHISLGNIPVQSKCSRLFFLNNISKNETIVFTWKPRSLDFGEVTVSPMEGEVGPEEGAPILVTLKASVHASFYSIDLICKVYQRELMRQYHKELQEWNEEKARQEVEFTITDRKVKRRAYCAAHEPPKKYKTLPPITNQPPLNRPATWNLKLAKKETSWPCPQPPVPGLLCLGLTARAHATDYYLANFFSEFPCHFLYRELPKKKSSKEESKSSEELPDKKGPVSRQKQQLLVDCLTSIIRGLLEDKNFHNAVDQNLVEQVPYFCQFWNEQSARFLAQKSSLYLVPILSLPPSYEGRKSKEQEEDLFGKMPGGQEDDEEEEEDEEEAEEEEEEIEEEMSKDEEDIDKDAKMTWSGIKVTETSQHSLQWQWQQDLKTIIKEETESDEKEAIGRLPAFANLQEAILENMIQNILVEASRGEVVLTSRPRIIALPPVSMHRTDNLLQMSQGDVLCSGMQHPDCLLVSASSPSNMTT</sequence>
<proteinExistence type="evidence at protein level"/>
<accession>Q3V0B4</accession>
<dbReference type="EMBL" id="AK133278">
    <property type="protein sequence ID" value="BAE21590.1"/>
    <property type="molecule type" value="mRNA"/>
</dbReference>
<dbReference type="CCDS" id="CCDS15060.1"/>
<dbReference type="RefSeq" id="NP_001034584.1">
    <property type="nucleotide sequence ID" value="NM_001039495.2"/>
</dbReference>
<dbReference type="RefSeq" id="XP_006496053.1">
    <property type="nucleotide sequence ID" value="XM_006495990.1"/>
</dbReference>
<dbReference type="SMR" id="Q3V0B4"/>
<dbReference type="FunCoup" id="Q3V0B4">
    <property type="interactions" value="51"/>
</dbReference>
<dbReference type="STRING" id="10090.ENSMUSP00000092440"/>
<dbReference type="iPTMnet" id="Q3V0B4"/>
<dbReference type="PhosphoSitePlus" id="Q3V0B4"/>
<dbReference type="PaxDb" id="10090-ENSMUSP00000092440"/>
<dbReference type="ProteomicsDB" id="281392"/>
<dbReference type="Antibodypedia" id="34298">
    <property type="antibodies" value="44 antibodies from 10 providers"/>
</dbReference>
<dbReference type="Ensembl" id="ENSMUST00000094844.4">
    <property type="protein sequence ID" value="ENSMUSP00000092440.4"/>
    <property type="gene ID" value="ENSMUSG00000047021.15"/>
</dbReference>
<dbReference type="GeneID" id="241116"/>
<dbReference type="KEGG" id="mmu:241116"/>
<dbReference type="UCSC" id="uc007bnj.1">
    <property type="organism name" value="mouse"/>
</dbReference>
<dbReference type="AGR" id="MGI:2444274"/>
<dbReference type="CTD" id="255101"/>
<dbReference type="MGI" id="MGI:2444274">
    <property type="gene designation" value="Cfap65"/>
</dbReference>
<dbReference type="VEuPathDB" id="HostDB:ENSMUSG00000047021"/>
<dbReference type="eggNOG" id="ENOG502QSJW">
    <property type="taxonomic scope" value="Eukaryota"/>
</dbReference>
<dbReference type="GeneTree" id="ENSGT00430000031142"/>
<dbReference type="HOGENOM" id="CLU_000944_1_0_1"/>
<dbReference type="InParanoid" id="Q3V0B4"/>
<dbReference type="OMA" id="QQLKVMV"/>
<dbReference type="OrthoDB" id="415597at2759"/>
<dbReference type="PhylomeDB" id="Q3V0B4"/>
<dbReference type="TreeFam" id="TF329056"/>
<dbReference type="BioGRID-ORCS" id="241116">
    <property type="hits" value="2 hits in 81 CRISPR screens"/>
</dbReference>
<dbReference type="ChiTaRS" id="Ccdc108">
    <property type="organism name" value="mouse"/>
</dbReference>
<dbReference type="PRO" id="PR:Q3V0B4"/>
<dbReference type="Proteomes" id="UP000000589">
    <property type="component" value="Chromosome 1"/>
</dbReference>
<dbReference type="RNAct" id="Q3V0B4">
    <property type="molecule type" value="protein"/>
</dbReference>
<dbReference type="Bgee" id="ENSMUSG00000047021">
    <property type="expression patterns" value="Expressed in spermatocyte and 43 other cell types or tissues"/>
</dbReference>
<dbReference type="GO" id="GO:0002080">
    <property type="term" value="C:acrosomal membrane"/>
    <property type="evidence" value="ECO:0007669"/>
    <property type="project" value="UniProtKB-SubCell"/>
</dbReference>
<dbReference type="GO" id="GO:0001669">
    <property type="term" value="C:acrosomal vesicle"/>
    <property type="evidence" value="ECO:0000250"/>
    <property type="project" value="UniProtKB"/>
</dbReference>
<dbReference type="GO" id="GO:0005737">
    <property type="term" value="C:cytoplasm"/>
    <property type="evidence" value="ECO:0000314"/>
    <property type="project" value="UniProtKB"/>
</dbReference>
<dbReference type="GO" id="GO:0005886">
    <property type="term" value="C:plasma membrane"/>
    <property type="evidence" value="ECO:0007669"/>
    <property type="project" value="UniProtKB-KW"/>
</dbReference>
<dbReference type="GO" id="GO:0036126">
    <property type="term" value="C:sperm flagellum"/>
    <property type="evidence" value="ECO:0000314"/>
    <property type="project" value="UniProtKB"/>
</dbReference>
<dbReference type="GO" id="GO:0097225">
    <property type="term" value="C:sperm midpiece"/>
    <property type="evidence" value="ECO:0000250"/>
    <property type="project" value="UniProtKB"/>
</dbReference>
<dbReference type="GO" id="GO:0030317">
    <property type="term" value="P:flagellated sperm motility"/>
    <property type="evidence" value="ECO:0000315"/>
    <property type="project" value="UniProtKB"/>
</dbReference>
<dbReference type="GO" id="GO:0007288">
    <property type="term" value="P:sperm axoneme assembly"/>
    <property type="evidence" value="ECO:0000315"/>
    <property type="project" value="UniProtKB"/>
</dbReference>
<dbReference type="Gene3D" id="2.60.40.10">
    <property type="entry name" value="Immunoglobulins"/>
    <property type="match status" value="10"/>
</dbReference>
<dbReference type="InterPro" id="IPR052614">
    <property type="entry name" value="CFAP65"/>
</dbReference>
<dbReference type="InterPro" id="IPR013783">
    <property type="entry name" value="Ig-like_fold"/>
</dbReference>
<dbReference type="InterPro" id="IPR056305">
    <property type="entry name" value="Ig_CFAP65_10th"/>
</dbReference>
<dbReference type="PANTHER" id="PTHR46127">
    <property type="entry name" value="CILIA- AND FLAGELLA-ASSOCIATED PROTEIN 65"/>
    <property type="match status" value="1"/>
</dbReference>
<dbReference type="PANTHER" id="PTHR46127:SF1">
    <property type="entry name" value="CILIA- AND FLAGELLA-ASSOCIATED PROTEIN 65"/>
    <property type="match status" value="1"/>
</dbReference>
<dbReference type="Pfam" id="PF24291">
    <property type="entry name" value="Ig_CFAP65"/>
    <property type="match status" value="1"/>
</dbReference>
<dbReference type="Pfam" id="PF24507">
    <property type="entry name" value="Ig_CFAP65_4th"/>
    <property type="match status" value="1"/>
</dbReference>
<dbReference type="Pfam" id="PF25249">
    <property type="entry name" value="Ig_CFAP65_7th"/>
    <property type="match status" value="1"/>
</dbReference>
<dbReference type="Pfam" id="PF25248">
    <property type="entry name" value="Ig_CFAP65_8th"/>
    <property type="match status" value="1"/>
</dbReference>
<dbReference type="Pfam" id="PF24816">
    <property type="entry name" value="Ig_CFAP65__9th"/>
    <property type="match status" value="1"/>
</dbReference>
<evidence type="ECO:0000250" key="1">
    <source>
        <dbReference type="UniProtKB" id="Q6ZU64"/>
    </source>
</evidence>
<evidence type="ECO:0000255" key="2"/>
<evidence type="ECO:0000256" key="3">
    <source>
        <dbReference type="SAM" id="MobiDB-lite"/>
    </source>
</evidence>
<evidence type="ECO:0000269" key="4">
    <source>
    </source>
</evidence>
<evidence type="ECO:0000269" key="5">
    <source>
    </source>
</evidence>
<evidence type="ECO:0000269" key="6">
    <source>
    </source>
</evidence>
<evidence type="ECO:0000269" key="7">
    <source>
    </source>
</evidence>
<evidence type="ECO:0000305" key="8"/>
<evidence type="ECO:0000312" key="9">
    <source>
        <dbReference type="MGI" id="MGI:2444274"/>
    </source>
</evidence>
<feature type="chain" id="PRO_0000288806" description="Cilia- and flagella-associated protein 65">
    <location>
        <begin position="1"/>
        <end position="1847"/>
    </location>
</feature>
<feature type="transmembrane region" description="Helical" evidence="2">
    <location>
        <begin position="112"/>
        <end position="132"/>
    </location>
</feature>
<feature type="domain" description="MSP">
    <location>
        <begin position="805"/>
        <end position="914"/>
    </location>
</feature>
<feature type="region of interest" description="Disordered" evidence="3">
    <location>
        <begin position="1668"/>
        <end position="1721"/>
    </location>
</feature>
<feature type="coiled-coil region" evidence="2">
    <location>
        <begin position="1457"/>
        <end position="1483"/>
    </location>
</feature>
<feature type="compositionally biased region" description="Acidic residues" evidence="3">
    <location>
        <begin position="1688"/>
        <end position="1720"/>
    </location>
</feature>
<gene>
    <name evidence="1" type="primary">Cfap65</name>
    <name evidence="9" type="synonym">Ccdc108</name>
</gene>
<comment type="function">
    <text evidence="5">Plays a role in flagellar formation and sperm motility.</text>
</comment>
<comment type="subunit">
    <text evidence="7">Interacts with CFAP47.</text>
</comment>
<comment type="subcellular location">
    <subcellularLocation>
        <location evidence="6">Cell projection</location>
        <location evidence="6">Cilium</location>
        <location evidence="6">Flagellum membrane</location>
        <topology evidence="8">Single-pass membrane protein</topology>
    </subcellularLocation>
    <subcellularLocation>
        <location evidence="1">Cytoplasmic vesicle</location>
        <location evidence="1">Secretory vesicle</location>
        <location evidence="1">Acrosome membrane</location>
        <topology evidence="2">Single-pass type I membrane protein</topology>
    </subcellularLocation>
    <subcellularLocation>
        <location evidence="6">Cytoplasm</location>
    </subcellularLocation>
    <text evidence="6">Expressed in the cytoplasm of the spermatogonia, round spermatids, early elongating spermatids and late elongating spermatids and in the flagella of epididymal spermatozoa.</text>
</comment>
<comment type="tissue specificity">
    <text evidence="4 6">Predominantly expressed in testis (PubMed:31571197). Highly expressed in round and elongating spermatids (PubMed:31413122, PubMed:31571197). Expressed also in certain ciliated organs, such as the brain, lung and kidney (PubMed:31413122).</text>
</comment>
<comment type="developmental stage">
    <text evidence="4 6">Begins to be significantly expressed at postnatal day 15, reachs a peak at postnatal day 22 and then maintains stable expression level.</text>
</comment>
<comment type="disruption phenotype">
    <text evidence="5">Deficient male are infertile whereas female mutants could give birth. Deficient male show severe morphological abnormalities of the sperm flagella. The majority of spermatozoa display absent or short flagella and the flagellar axoneme is completely disorganised.</text>
</comment>
<comment type="similarity">
    <text evidence="8">Belongs to the CFAP65 family.</text>
</comment>
<name>CFA65_MOUSE</name>
<protein>
    <recommendedName>
        <fullName evidence="8">Cilia- and flagella-associated protein 65</fullName>
    </recommendedName>
    <alternativeName>
        <fullName evidence="9">Coiled-coil domain-containing protein 108</fullName>
    </alternativeName>
</protein>
<keyword id="KW-1003">Cell membrane</keyword>
<keyword id="KW-0966">Cell projection</keyword>
<keyword id="KW-0969">Cilium</keyword>
<keyword id="KW-0970">Cilium biogenesis/degradation</keyword>
<keyword id="KW-0175">Coiled coil</keyword>
<keyword id="KW-0963">Cytoplasm</keyword>
<keyword id="KW-0968">Cytoplasmic vesicle</keyword>
<keyword id="KW-0282">Flagellum</keyword>
<keyword id="KW-0472">Membrane</keyword>
<keyword id="KW-1185">Reference proteome</keyword>
<keyword id="KW-0812">Transmembrane</keyword>
<keyword id="KW-1133">Transmembrane helix</keyword>
<reference key="1">
    <citation type="journal article" date="2005" name="Science">
        <title>The transcriptional landscape of the mammalian genome.</title>
        <authorList>
            <person name="Carninci P."/>
            <person name="Kasukawa T."/>
            <person name="Katayama S."/>
            <person name="Gough J."/>
            <person name="Frith M.C."/>
            <person name="Maeda N."/>
            <person name="Oyama R."/>
            <person name="Ravasi T."/>
            <person name="Lenhard B."/>
            <person name="Wells C."/>
            <person name="Kodzius R."/>
            <person name="Shimokawa K."/>
            <person name="Bajic V.B."/>
            <person name="Brenner S.E."/>
            <person name="Batalov S."/>
            <person name="Forrest A.R."/>
            <person name="Zavolan M."/>
            <person name="Davis M.J."/>
            <person name="Wilming L.G."/>
            <person name="Aidinis V."/>
            <person name="Allen J.E."/>
            <person name="Ambesi-Impiombato A."/>
            <person name="Apweiler R."/>
            <person name="Aturaliya R.N."/>
            <person name="Bailey T.L."/>
            <person name="Bansal M."/>
            <person name="Baxter L."/>
            <person name="Beisel K.W."/>
            <person name="Bersano T."/>
            <person name="Bono H."/>
            <person name="Chalk A.M."/>
            <person name="Chiu K.P."/>
            <person name="Choudhary V."/>
            <person name="Christoffels A."/>
            <person name="Clutterbuck D.R."/>
            <person name="Crowe M.L."/>
            <person name="Dalla E."/>
            <person name="Dalrymple B.P."/>
            <person name="de Bono B."/>
            <person name="Della Gatta G."/>
            <person name="di Bernardo D."/>
            <person name="Down T."/>
            <person name="Engstrom P."/>
            <person name="Fagiolini M."/>
            <person name="Faulkner G."/>
            <person name="Fletcher C.F."/>
            <person name="Fukushima T."/>
            <person name="Furuno M."/>
            <person name="Futaki S."/>
            <person name="Gariboldi M."/>
            <person name="Georgii-Hemming P."/>
            <person name="Gingeras T.R."/>
            <person name="Gojobori T."/>
            <person name="Green R.E."/>
            <person name="Gustincich S."/>
            <person name="Harbers M."/>
            <person name="Hayashi Y."/>
            <person name="Hensch T.K."/>
            <person name="Hirokawa N."/>
            <person name="Hill D."/>
            <person name="Huminiecki L."/>
            <person name="Iacono M."/>
            <person name="Ikeo K."/>
            <person name="Iwama A."/>
            <person name="Ishikawa T."/>
            <person name="Jakt M."/>
            <person name="Kanapin A."/>
            <person name="Katoh M."/>
            <person name="Kawasawa Y."/>
            <person name="Kelso J."/>
            <person name="Kitamura H."/>
            <person name="Kitano H."/>
            <person name="Kollias G."/>
            <person name="Krishnan S.P."/>
            <person name="Kruger A."/>
            <person name="Kummerfeld S.K."/>
            <person name="Kurochkin I.V."/>
            <person name="Lareau L.F."/>
            <person name="Lazarevic D."/>
            <person name="Lipovich L."/>
            <person name="Liu J."/>
            <person name="Liuni S."/>
            <person name="McWilliam S."/>
            <person name="Madan Babu M."/>
            <person name="Madera M."/>
            <person name="Marchionni L."/>
            <person name="Matsuda H."/>
            <person name="Matsuzawa S."/>
            <person name="Miki H."/>
            <person name="Mignone F."/>
            <person name="Miyake S."/>
            <person name="Morris K."/>
            <person name="Mottagui-Tabar S."/>
            <person name="Mulder N."/>
            <person name="Nakano N."/>
            <person name="Nakauchi H."/>
            <person name="Ng P."/>
            <person name="Nilsson R."/>
            <person name="Nishiguchi S."/>
            <person name="Nishikawa S."/>
            <person name="Nori F."/>
            <person name="Ohara O."/>
            <person name="Okazaki Y."/>
            <person name="Orlando V."/>
            <person name="Pang K.C."/>
            <person name="Pavan W.J."/>
            <person name="Pavesi G."/>
            <person name="Pesole G."/>
            <person name="Petrovsky N."/>
            <person name="Piazza S."/>
            <person name="Reed J."/>
            <person name="Reid J.F."/>
            <person name="Ring B.Z."/>
            <person name="Ringwald M."/>
            <person name="Rost B."/>
            <person name="Ruan Y."/>
            <person name="Salzberg S.L."/>
            <person name="Sandelin A."/>
            <person name="Schneider C."/>
            <person name="Schoenbach C."/>
            <person name="Sekiguchi K."/>
            <person name="Semple C.A."/>
            <person name="Seno S."/>
            <person name="Sessa L."/>
            <person name="Sheng Y."/>
            <person name="Shibata Y."/>
            <person name="Shimada H."/>
            <person name="Shimada K."/>
            <person name="Silva D."/>
            <person name="Sinclair B."/>
            <person name="Sperling S."/>
            <person name="Stupka E."/>
            <person name="Sugiura K."/>
            <person name="Sultana R."/>
            <person name="Takenaka Y."/>
            <person name="Taki K."/>
            <person name="Tammoja K."/>
            <person name="Tan S.L."/>
            <person name="Tang S."/>
            <person name="Taylor M.S."/>
            <person name="Tegner J."/>
            <person name="Teichmann S.A."/>
            <person name="Ueda H.R."/>
            <person name="van Nimwegen E."/>
            <person name="Verardo R."/>
            <person name="Wei C.L."/>
            <person name="Yagi K."/>
            <person name="Yamanishi H."/>
            <person name="Zabarovsky E."/>
            <person name="Zhu S."/>
            <person name="Zimmer A."/>
            <person name="Hide W."/>
            <person name="Bult C."/>
            <person name="Grimmond S.M."/>
            <person name="Teasdale R.D."/>
            <person name="Liu E.T."/>
            <person name="Brusic V."/>
            <person name="Quackenbush J."/>
            <person name="Wahlestedt C."/>
            <person name="Mattick J.S."/>
            <person name="Hume D.A."/>
            <person name="Kai C."/>
            <person name="Sasaki D."/>
            <person name="Tomaru Y."/>
            <person name="Fukuda S."/>
            <person name="Kanamori-Katayama M."/>
            <person name="Suzuki M."/>
            <person name="Aoki J."/>
            <person name="Arakawa T."/>
            <person name="Iida J."/>
            <person name="Imamura K."/>
            <person name="Itoh M."/>
            <person name="Kato T."/>
            <person name="Kawaji H."/>
            <person name="Kawagashira N."/>
            <person name="Kawashima T."/>
            <person name="Kojima M."/>
            <person name="Kondo S."/>
            <person name="Konno H."/>
            <person name="Nakano K."/>
            <person name="Ninomiya N."/>
            <person name="Nishio T."/>
            <person name="Okada M."/>
            <person name="Plessy C."/>
            <person name="Shibata K."/>
            <person name="Shiraki T."/>
            <person name="Suzuki S."/>
            <person name="Tagami M."/>
            <person name="Waki K."/>
            <person name="Watahiki A."/>
            <person name="Okamura-Oho Y."/>
            <person name="Suzuki H."/>
            <person name="Kawai J."/>
            <person name="Hayashizaki Y."/>
        </authorList>
    </citation>
    <scope>NUCLEOTIDE SEQUENCE [LARGE SCALE MRNA]</scope>
    <source>
        <strain>C57BL/6J</strain>
        <tissue>Testis</tissue>
    </source>
</reference>
<reference key="2">
    <citation type="journal article" date="2010" name="Cell">
        <title>A tissue-specific atlas of mouse protein phosphorylation and expression.</title>
        <authorList>
            <person name="Huttlin E.L."/>
            <person name="Jedrychowski M.P."/>
            <person name="Elias J.E."/>
            <person name="Goswami T."/>
            <person name="Rad R."/>
            <person name="Beausoleil S.A."/>
            <person name="Villen J."/>
            <person name="Haas W."/>
            <person name="Sowa M.E."/>
            <person name="Gygi S.P."/>
        </authorList>
    </citation>
    <scope>IDENTIFICATION BY MASS SPECTROMETRY [LARGE SCALE ANALYSIS]</scope>
    <source>
        <tissue>Testis</tissue>
    </source>
</reference>
<reference key="3">
    <citation type="journal article" date="2019" name="Clin. Genet.">
        <title>A novel homozygous CFAP65 mutation in humans causes male infertility with multiple morphological abnormalities of the sperm flagella.</title>
        <authorList>
            <person name="Zhang X."/>
            <person name="Shen Y."/>
            <person name="Wang X."/>
            <person name="Yuan G."/>
            <person name="Zhang C."/>
            <person name="Yang Y."/>
        </authorList>
    </citation>
    <scope>TISSUE SPECIFICITY</scope>
    <scope>DEVELOPMENTAL STAGE</scope>
</reference>
<reference key="4">
    <citation type="journal article" date="2019" name="J. Med. Genet.">
        <title>Biallelic mutations in CFAP65 lead to severe asthenoteratospermia due to acrosome hypoplasia and flagellum malformations.</title>
        <authorList>
            <person name="Wang W."/>
            <person name="Tu C."/>
            <person name="Nie H."/>
            <person name="Meng L."/>
            <person name="Li Y."/>
            <person name="Yuan S."/>
            <person name="Zhang Q."/>
            <person name="Du J."/>
            <person name="Wang J."/>
            <person name="Gong F."/>
            <person name="Fan L."/>
            <person name="Lu G.X."/>
            <person name="Lin G."/>
            <person name="Tan Y.Q."/>
        </authorList>
    </citation>
    <scope>TISSUE SPECIFICITY</scope>
    <scope>DEVELOPMENTAL STAGE</scope>
</reference>
<reference key="5">
    <citation type="journal article" date="2020" name="J. Med. Genet.">
        <title>Biallelic mutations in CFAP65 cause male infertility with multiple morphological abnormalities of the sperm flagella in humans and mice.</title>
        <authorList>
            <person name="Li W."/>
            <person name="Wu H."/>
            <person name="Li F."/>
            <person name="Tian S."/>
            <person name="Kherraf Z.E."/>
            <person name="Zhang J."/>
            <person name="Ni X."/>
            <person name="Lv M."/>
            <person name="Liu C."/>
            <person name="Tan Q."/>
            <person name="Shen Y."/>
            <person name="Amiri-Yekta A."/>
            <person name="Cazin C."/>
            <person name="Zhang J."/>
            <person name="Liu W."/>
            <person name="Zheng Y."/>
            <person name="Cheng H."/>
            <person name="Wu Y."/>
            <person name="Wang J."/>
            <person name="Gao Y."/>
            <person name="Chen Y."/>
            <person name="Zha X."/>
            <person name="Jin L."/>
            <person name="Liu M."/>
            <person name="He X."/>
            <person name="Ray P.F."/>
            <person name="Cao Y."/>
            <person name="Zhang F."/>
        </authorList>
    </citation>
    <scope>DISRUPTION PHENOTYPE</scope>
    <scope>FUNCTION</scope>
</reference>
<reference key="6">
    <citation type="journal article" date="2021" name="Am. J. Hum. Genet.">
        <title>Deleterious variants in X-linked CFAP47 induce asthenoteratozoospermia and primary male infertility.</title>
        <authorList>
            <person name="Liu C."/>
            <person name="Tu C."/>
            <person name="Wang L."/>
            <person name="Wu H."/>
            <person name="Houston B.J."/>
            <person name="Mastrorosa F.K."/>
            <person name="Zhang W."/>
            <person name="Shen Y."/>
            <person name="Wang J."/>
            <person name="Tian S."/>
            <person name="Meng L."/>
            <person name="Cong J."/>
            <person name="Yang S."/>
            <person name="Jiang Y."/>
            <person name="Tang S."/>
            <person name="Zeng Y."/>
            <person name="Lv M."/>
            <person name="Lin G."/>
            <person name="Li J."/>
            <person name="Saiyin H."/>
            <person name="He X."/>
            <person name="Jin L."/>
            <person name="Toure A."/>
            <person name="Ray P.F."/>
            <person name="Veltman J.A."/>
            <person name="Shi Q."/>
            <person name="O'Bryan M.K."/>
            <person name="Cao Y."/>
            <person name="Tan Y.Q."/>
            <person name="Zhang F."/>
        </authorList>
    </citation>
    <scope>INTERACTION WITH CFAP47</scope>
</reference>